<accession>B1IP55</accession>
<keyword id="KW-0238">DNA-binding</keyword>
<keyword id="KW-0408">Iron</keyword>
<keyword id="KW-0411">Iron-sulfur</keyword>
<keyword id="KW-0479">Metal-binding</keyword>
<keyword id="KW-0678">Repressor</keyword>
<keyword id="KW-0804">Transcription</keyword>
<keyword id="KW-0805">Transcription regulation</keyword>
<name>FEOC_ECOLC</name>
<reference key="1">
    <citation type="submission" date="2008-02" db="EMBL/GenBank/DDBJ databases">
        <title>Complete sequence of Escherichia coli C str. ATCC 8739.</title>
        <authorList>
            <person name="Copeland A."/>
            <person name="Lucas S."/>
            <person name="Lapidus A."/>
            <person name="Glavina del Rio T."/>
            <person name="Dalin E."/>
            <person name="Tice H."/>
            <person name="Bruce D."/>
            <person name="Goodwin L."/>
            <person name="Pitluck S."/>
            <person name="Kiss H."/>
            <person name="Brettin T."/>
            <person name="Detter J.C."/>
            <person name="Han C."/>
            <person name="Kuske C.R."/>
            <person name="Schmutz J."/>
            <person name="Larimer F."/>
            <person name="Land M."/>
            <person name="Hauser L."/>
            <person name="Kyrpides N."/>
            <person name="Mikhailova N."/>
            <person name="Ingram L."/>
            <person name="Richardson P."/>
        </authorList>
    </citation>
    <scope>NUCLEOTIDE SEQUENCE [LARGE SCALE GENOMIC DNA]</scope>
    <source>
        <strain>ATCC 8739 / DSM 1576 / NBRC 3972 / NCIMB 8545 / WDCM 00012 / Crooks</strain>
    </source>
</reference>
<feature type="chain" id="PRO_1000087954" description="Probable [Fe-S]-dependent transcriptional repressor">
    <location>
        <begin position="1"/>
        <end position="78"/>
    </location>
</feature>
<feature type="binding site" evidence="1">
    <location>
        <position position="56"/>
    </location>
    <ligand>
        <name>iron-sulfur cluster</name>
        <dbReference type="ChEBI" id="CHEBI:30408"/>
    </ligand>
</feature>
<feature type="binding site" evidence="1">
    <location>
        <position position="61"/>
    </location>
    <ligand>
        <name>iron-sulfur cluster</name>
        <dbReference type="ChEBI" id="CHEBI:30408"/>
    </ligand>
</feature>
<feature type="binding site" evidence="1">
    <location>
        <position position="64"/>
    </location>
    <ligand>
        <name>iron-sulfur cluster</name>
        <dbReference type="ChEBI" id="CHEBI:30408"/>
    </ligand>
</feature>
<feature type="binding site" evidence="1">
    <location>
        <position position="70"/>
    </location>
    <ligand>
        <name>iron-sulfur cluster</name>
        <dbReference type="ChEBI" id="CHEBI:30408"/>
    </ligand>
</feature>
<dbReference type="EMBL" id="CP000946">
    <property type="protein sequence ID" value="ACA75981.1"/>
    <property type="molecule type" value="Genomic_DNA"/>
</dbReference>
<dbReference type="RefSeq" id="WP_001295699.1">
    <property type="nucleotide sequence ID" value="NZ_MTFT01000001.1"/>
</dbReference>
<dbReference type="BMRB" id="B1IP55"/>
<dbReference type="SMR" id="B1IP55"/>
<dbReference type="GeneID" id="93778588"/>
<dbReference type="KEGG" id="ecl:EcolC_0303"/>
<dbReference type="HOGENOM" id="CLU_189182_0_0_6"/>
<dbReference type="GO" id="GO:0003677">
    <property type="term" value="F:DNA binding"/>
    <property type="evidence" value="ECO:0007669"/>
    <property type="project" value="UniProtKB-KW"/>
</dbReference>
<dbReference type="GO" id="GO:0005506">
    <property type="term" value="F:iron ion binding"/>
    <property type="evidence" value="ECO:0007669"/>
    <property type="project" value="UniProtKB-UniRule"/>
</dbReference>
<dbReference type="GO" id="GO:0051536">
    <property type="term" value="F:iron-sulfur cluster binding"/>
    <property type="evidence" value="ECO:0007669"/>
    <property type="project" value="UniProtKB-KW"/>
</dbReference>
<dbReference type="Gene3D" id="1.10.10.10">
    <property type="entry name" value="Winged helix-like DNA-binding domain superfamily/Winged helix DNA-binding domain"/>
    <property type="match status" value="1"/>
</dbReference>
<dbReference type="HAMAP" id="MF_01586">
    <property type="entry name" value="FeoC"/>
    <property type="match status" value="1"/>
</dbReference>
<dbReference type="InterPro" id="IPR023732">
    <property type="entry name" value="FeoC"/>
</dbReference>
<dbReference type="InterPro" id="IPR015102">
    <property type="entry name" value="Tscrpt_reg_HTH_FeoC"/>
</dbReference>
<dbReference type="InterPro" id="IPR036388">
    <property type="entry name" value="WH-like_DNA-bd_sf"/>
</dbReference>
<dbReference type="InterPro" id="IPR036390">
    <property type="entry name" value="WH_DNA-bd_sf"/>
</dbReference>
<dbReference type="NCBIfam" id="NF011960">
    <property type="entry name" value="PRK15431.1"/>
    <property type="match status" value="1"/>
</dbReference>
<dbReference type="Pfam" id="PF09012">
    <property type="entry name" value="FeoC"/>
    <property type="match status" value="1"/>
</dbReference>
<dbReference type="SUPFAM" id="SSF46785">
    <property type="entry name" value="Winged helix' DNA-binding domain"/>
    <property type="match status" value="1"/>
</dbReference>
<organism>
    <name type="scientific">Escherichia coli (strain ATCC 8739 / DSM 1576 / NBRC 3972 / NCIMB 8545 / WDCM 00012 / Crooks)</name>
    <dbReference type="NCBI Taxonomy" id="481805"/>
    <lineage>
        <taxon>Bacteria</taxon>
        <taxon>Pseudomonadati</taxon>
        <taxon>Pseudomonadota</taxon>
        <taxon>Gammaproteobacteria</taxon>
        <taxon>Enterobacterales</taxon>
        <taxon>Enterobacteriaceae</taxon>
        <taxon>Escherichia</taxon>
    </lineage>
</organism>
<proteinExistence type="inferred from homology"/>
<gene>
    <name evidence="1" type="primary">feoC</name>
    <name type="ordered locus">EcolC_0303</name>
</gene>
<protein>
    <recommendedName>
        <fullName evidence="1">Probable [Fe-S]-dependent transcriptional repressor</fullName>
    </recommendedName>
</protein>
<sequence>MASLIQVRDLLALRGRMEATQISQTLNTPQPMINAMLQQLESMGKAVRIQEEPDGCLSGSCKSCPEGKACLREWWALR</sequence>
<comment type="function">
    <text evidence="1">May function as a transcriptional regulator that controls feoABC expression.</text>
</comment>
<comment type="similarity">
    <text evidence="1">Belongs to the FeoC family.</text>
</comment>
<evidence type="ECO:0000255" key="1">
    <source>
        <dbReference type="HAMAP-Rule" id="MF_01586"/>
    </source>
</evidence>